<name>YHP5_YEAST</name>
<gene>
    <name type="ordered locus">YHR095W</name>
</gene>
<feature type="chain" id="PRO_0000202906" description="Putative uncharacterized protein YHR095W">
    <location>
        <begin position="1"/>
        <end position="164"/>
    </location>
</feature>
<organism>
    <name type="scientific">Saccharomyces cerevisiae (strain ATCC 204508 / S288c)</name>
    <name type="common">Baker's yeast</name>
    <dbReference type="NCBI Taxonomy" id="559292"/>
    <lineage>
        <taxon>Eukaryota</taxon>
        <taxon>Fungi</taxon>
        <taxon>Dikarya</taxon>
        <taxon>Ascomycota</taxon>
        <taxon>Saccharomycotina</taxon>
        <taxon>Saccharomycetes</taxon>
        <taxon>Saccharomycetales</taxon>
        <taxon>Saccharomycetaceae</taxon>
        <taxon>Saccharomyces</taxon>
    </lineage>
</organism>
<accession>P38808</accession>
<reference key="1">
    <citation type="journal article" date="1994" name="Science">
        <title>Complete nucleotide sequence of Saccharomyces cerevisiae chromosome VIII.</title>
        <authorList>
            <person name="Johnston M."/>
            <person name="Andrews S."/>
            <person name="Brinkman R."/>
            <person name="Cooper J."/>
            <person name="Ding H."/>
            <person name="Dover J."/>
            <person name="Du Z."/>
            <person name="Favello A."/>
            <person name="Fulton L."/>
            <person name="Gattung S."/>
            <person name="Geisel C."/>
            <person name="Kirsten J."/>
            <person name="Kucaba T."/>
            <person name="Hillier L.W."/>
            <person name="Jier M."/>
            <person name="Johnston L."/>
            <person name="Langston Y."/>
            <person name="Latreille P."/>
            <person name="Louis E.J."/>
            <person name="Macri C."/>
            <person name="Mardis E."/>
            <person name="Menezes S."/>
            <person name="Mouser L."/>
            <person name="Nhan M."/>
            <person name="Rifkin L."/>
            <person name="Riles L."/>
            <person name="St Peter H."/>
            <person name="Trevaskis E."/>
            <person name="Vaughan K."/>
            <person name="Vignati D."/>
            <person name="Wilcox L."/>
            <person name="Wohldman P."/>
            <person name="Waterston R."/>
            <person name="Wilson R."/>
            <person name="Vaudin M."/>
        </authorList>
    </citation>
    <scope>NUCLEOTIDE SEQUENCE [LARGE SCALE GENOMIC DNA]</scope>
    <source>
        <strain>ATCC 204508 / S288c</strain>
    </source>
</reference>
<reference key="2">
    <citation type="journal article" date="2014" name="G3 (Bethesda)">
        <title>The reference genome sequence of Saccharomyces cerevisiae: Then and now.</title>
        <authorList>
            <person name="Engel S.R."/>
            <person name="Dietrich F.S."/>
            <person name="Fisk D.G."/>
            <person name="Binkley G."/>
            <person name="Balakrishnan R."/>
            <person name="Costanzo M.C."/>
            <person name="Dwight S.S."/>
            <person name="Hitz B.C."/>
            <person name="Karra K."/>
            <person name="Nash R.S."/>
            <person name="Weng S."/>
            <person name="Wong E.D."/>
            <person name="Lloyd P."/>
            <person name="Skrzypek M.S."/>
            <person name="Miyasato S.R."/>
            <person name="Simison M."/>
            <person name="Cherry J.M."/>
        </authorList>
    </citation>
    <scope>GENOME REANNOTATION</scope>
    <scope>SEQUENCE REVISION TO 144</scope>
    <source>
        <strain>ATCC 204508 / S288c</strain>
    </source>
</reference>
<protein>
    <recommendedName>
        <fullName>Putative uncharacterized protein YHR095W</fullName>
    </recommendedName>
</protein>
<sequence>MNILFLIYLKDKRSARQCPAAFLPSFSEFPLRIGSCAHICQSFTEKKKEHWVTSEKLLTQCNSVIILCAVSLKKNQECKISINSLEVMMVSLSLTLLKKGFFSWSTLFRGKKKKKKKKKRILHVIYHDSTFLQAKMKIIRAHAQVVPAMPLRKNFRNQYSLHPP</sequence>
<evidence type="ECO:0000305" key="1"/>
<evidence type="ECO:0000305" key="2">
    <source>
    </source>
</evidence>
<comment type="caution">
    <text evidence="2">Product of a dubious gene prediction unlikely to encode a functional protein. Because of that it is not part of the S.cerevisiae S288c complete/reference proteome set.</text>
</comment>
<comment type="sequence caution" evidence="1">
    <conflict type="frameshift">
        <sequence resource="EMBL-CDS" id="AAB68924"/>
    </conflict>
</comment>
<dbReference type="EMBL" id="U00060">
    <property type="protein sequence ID" value="AAB68924.1"/>
    <property type="status" value="ALT_FRAME"/>
    <property type="molecule type" value="Genomic_DNA"/>
</dbReference>
<dbReference type="PIR" id="S46716">
    <property type="entry name" value="S46716"/>
</dbReference>
<dbReference type="IntAct" id="P38808">
    <property type="interactions" value="1"/>
</dbReference>
<dbReference type="STRING" id="4932.YHR095W"/>
<dbReference type="PaxDb" id="4932-YHR095W"/>
<dbReference type="EnsemblFungi" id="YHR095W_mRNA">
    <property type="protein sequence ID" value="YHR095W"/>
    <property type="gene ID" value="YHR095W"/>
</dbReference>
<dbReference type="AGR" id="SGD:S000001137"/>
<dbReference type="SGD" id="S000001137">
    <property type="gene designation" value="YHR095W"/>
</dbReference>
<dbReference type="HOGENOM" id="CLU_1620351_0_0_1"/>
<proteinExistence type="uncertain"/>